<comment type="function">
    <text evidence="1">Catalyzes the strictly specific dephosphorylation of 2'-deoxyribonucleoside 5'-monophosphates.</text>
</comment>
<comment type="catalytic activity">
    <reaction evidence="1">
        <text>a 2'-deoxyribonucleoside 5'-phosphate + H2O = a 2'-deoxyribonucleoside + phosphate</text>
        <dbReference type="Rhea" id="RHEA:36167"/>
        <dbReference type="ChEBI" id="CHEBI:15377"/>
        <dbReference type="ChEBI" id="CHEBI:18274"/>
        <dbReference type="ChEBI" id="CHEBI:43474"/>
        <dbReference type="ChEBI" id="CHEBI:65317"/>
        <dbReference type="EC" id="3.1.3.89"/>
    </reaction>
</comment>
<comment type="cofactor">
    <cofactor evidence="1">
        <name>a divalent metal cation</name>
        <dbReference type="ChEBI" id="CHEBI:60240"/>
    </cofactor>
</comment>
<comment type="subunit">
    <text evidence="1">Homodimer.</text>
</comment>
<comment type="subcellular location">
    <subcellularLocation>
        <location evidence="1">Cytoplasm</location>
    </subcellularLocation>
</comment>
<comment type="similarity">
    <text evidence="1">Belongs to the 5DNU family.</text>
</comment>
<feature type="chain" id="PRO_1000136978" description="5'-deoxynucleotidase YfbR">
    <location>
        <begin position="1"/>
        <end position="199"/>
    </location>
</feature>
<feature type="domain" description="HD" evidence="2">
    <location>
        <begin position="30"/>
        <end position="142"/>
    </location>
</feature>
<feature type="binding site" evidence="1">
    <location>
        <begin position="18"/>
        <end position="19"/>
    </location>
    <ligand>
        <name>substrate</name>
    </ligand>
</feature>
<feature type="binding site" evidence="1">
    <location>
        <position position="33"/>
    </location>
    <ligand>
        <name>a divalent metal cation</name>
        <dbReference type="ChEBI" id="CHEBI:60240"/>
    </ligand>
</feature>
<feature type="binding site" evidence="1">
    <location>
        <position position="33"/>
    </location>
    <ligand>
        <name>substrate</name>
    </ligand>
</feature>
<feature type="binding site" evidence="1">
    <location>
        <position position="68"/>
    </location>
    <ligand>
        <name>a divalent metal cation</name>
        <dbReference type="ChEBI" id="CHEBI:60240"/>
    </ligand>
</feature>
<feature type="binding site" evidence="1">
    <location>
        <position position="69"/>
    </location>
    <ligand>
        <name>a divalent metal cation</name>
        <dbReference type="ChEBI" id="CHEBI:60240"/>
    </ligand>
</feature>
<feature type="binding site" evidence="1">
    <location>
        <position position="69"/>
    </location>
    <ligand>
        <name>substrate</name>
    </ligand>
</feature>
<feature type="binding site" evidence="1">
    <location>
        <begin position="77"/>
        <end position="80"/>
    </location>
    <ligand>
        <name>substrate</name>
    </ligand>
</feature>
<feature type="binding site" evidence="1">
    <location>
        <position position="137"/>
    </location>
    <ligand>
        <name>a divalent metal cation</name>
        <dbReference type="ChEBI" id="CHEBI:60240"/>
    </ligand>
</feature>
<feature type="binding site" evidence="1">
    <location>
        <position position="137"/>
    </location>
    <ligand>
        <name>substrate</name>
    </ligand>
</feature>
<feature type="site" description="Appears to be important in orienting the phosphate for catalysis" evidence="1">
    <location>
        <position position="18"/>
    </location>
</feature>
<protein>
    <recommendedName>
        <fullName evidence="1">5'-deoxynucleotidase YfbR</fullName>
        <ecNumber evidence="1">3.1.3.89</ecNumber>
    </recommendedName>
    <alternativeName>
        <fullName evidence="1">5'-deoxyribonucleotidase</fullName>
    </alternativeName>
    <alternativeName>
        <fullName evidence="1">Nucleoside 5'-monophosphate phosphohydrolase</fullName>
    </alternativeName>
</protein>
<dbReference type="EC" id="3.1.3.89" evidence="1"/>
<dbReference type="EMBL" id="CP001127">
    <property type="protein sequence ID" value="ACF88841.1"/>
    <property type="molecule type" value="Genomic_DNA"/>
</dbReference>
<dbReference type="RefSeq" id="WP_000813882.1">
    <property type="nucleotide sequence ID" value="NC_011094.1"/>
</dbReference>
<dbReference type="SMR" id="B4TQ66"/>
<dbReference type="KEGG" id="sew:SeSA_A2560"/>
<dbReference type="HOGENOM" id="CLU_084784_0_0_6"/>
<dbReference type="Proteomes" id="UP000001865">
    <property type="component" value="Chromosome"/>
</dbReference>
<dbReference type="GO" id="GO:0005737">
    <property type="term" value="C:cytoplasm"/>
    <property type="evidence" value="ECO:0007669"/>
    <property type="project" value="UniProtKB-SubCell"/>
</dbReference>
<dbReference type="GO" id="GO:0002953">
    <property type="term" value="F:5'-deoxynucleotidase activity"/>
    <property type="evidence" value="ECO:0007669"/>
    <property type="project" value="UniProtKB-EC"/>
</dbReference>
<dbReference type="GO" id="GO:0046872">
    <property type="term" value="F:metal ion binding"/>
    <property type="evidence" value="ECO:0007669"/>
    <property type="project" value="UniProtKB-KW"/>
</dbReference>
<dbReference type="GO" id="GO:0000166">
    <property type="term" value="F:nucleotide binding"/>
    <property type="evidence" value="ECO:0007669"/>
    <property type="project" value="UniProtKB-KW"/>
</dbReference>
<dbReference type="FunFam" id="1.10.3210.10:FF:000002">
    <property type="entry name" value="Nucleotidase YfbR"/>
    <property type="match status" value="1"/>
</dbReference>
<dbReference type="Gene3D" id="1.10.3210.10">
    <property type="entry name" value="Hypothetical protein af1432"/>
    <property type="match status" value="1"/>
</dbReference>
<dbReference type="HAMAP" id="MF_01100">
    <property type="entry name" value="5DNU"/>
    <property type="match status" value="1"/>
</dbReference>
<dbReference type="InterPro" id="IPR003607">
    <property type="entry name" value="HD/PDEase_dom"/>
</dbReference>
<dbReference type="InterPro" id="IPR006674">
    <property type="entry name" value="HD_domain"/>
</dbReference>
<dbReference type="InterPro" id="IPR022971">
    <property type="entry name" value="YfbR"/>
</dbReference>
<dbReference type="InterPro" id="IPR039356">
    <property type="entry name" value="YfbR/HDDC2"/>
</dbReference>
<dbReference type="NCBIfam" id="NF003009">
    <property type="entry name" value="PRK03826.1"/>
    <property type="match status" value="1"/>
</dbReference>
<dbReference type="PANTHER" id="PTHR11845">
    <property type="entry name" value="5'-DEOXYNUCLEOTIDASE HDDC2"/>
    <property type="match status" value="1"/>
</dbReference>
<dbReference type="PANTHER" id="PTHR11845:SF13">
    <property type="entry name" value="5'-DEOXYNUCLEOTIDASE HDDC2"/>
    <property type="match status" value="1"/>
</dbReference>
<dbReference type="Pfam" id="PF12917">
    <property type="entry name" value="YfbR-like"/>
    <property type="match status" value="1"/>
</dbReference>
<dbReference type="SMART" id="SM00471">
    <property type="entry name" value="HDc"/>
    <property type="match status" value="1"/>
</dbReference>
<dbReference type="SUPFAM" id="SSF109604">
    <property type="entry name" value="HD-domain/PDEase-like"/>
    <property type="match status" value="1"/>
</dbReference>
<dbReference type="PROSITE" id="PS51831">
    <property type="entry name" value="HD"/>
    <property type="match status" value="1"/>
</dbReference>
<proteinExistence type="inferred from homology"/>
<evidence type="ECO:0000255" key="1">
    <source>
        <dbReference type="HAMAP-Rule" id="MF_01100"/>
    </source>
</evidence>
<evidence type="ECO:0000255" key="2">
    <source>
        <dbReference type="PROSITE-ProRule" id="PRU01175"/>
    </source>
</evidence>
<reference key="1">
    <citation type="journal article" date="2011" name="J. Bacteriol.">
        <title>Comparative genomics of 28 Salmonella enterica isolates: evidence for CRISPR-mediated adaptive sublineage evolution.</title>
        <authorList>
            <person name="Fricke W.F."/>
            <person name="Mammel M.K."/>
            <person name="McDermott P.F."/>
            <person name="Tartera C."/>
            <person name="White D.G."/>
            <person name="Leclerc J.E."/>
            <person name="Ravel J."/>
            <person name="Cebula T.A."/>
        </authorList>
    </citation>
    <scope>NUCLEOTIDE SEQUENCE [LARGE SCALE GENOMIC DNA]</scope>
    <source>
        <strain>CVM19633</strain>
    </source>
</reference>
<accession>B4TQ66</accession>
<keyword id="KW-0963">Cytoplasm</keyword>
<keyword id="KW-0378">Hydrolase</keyword>
<keyword id="KW-0479">Metal-binding</keyword>
<keyword id="KW-0547">Nucleotide-binding</keyword>
<gene>
    <name evidence="1" type="primary">yfbR</name>
    <name type="ordered locus">SeSA_A2560</name>
</gene>
<sequence>MKQSHFFAHLSRMKLINRWPLMRNVRTENVSEHSLQVAMVAHALAAIKNRKFGGQLNAERIALLAMYHDASEVLTGDLPTPVKYFNSQIAQEYKAIEKIAQQKLVDMAPDELRDIFAPLIDENAWSEEEQAIVKQADALCAYLKCLEELSAGNNEFGLAKTRLEKTLELRRSQEMDYFMAVFVPSFHLSLDEISQDSPL</sequence>
<organism>
    <name type="scientific">Salmonella schwarzengrund (strain CVM19633)</name>
    <dbReference type="NCBI Taxonomy" id="439843"/>
    <lineage>
        <taxon>Bacteria</taxon>
        <taxon>Pseudomonadati</taxon>
        <taxon>Pseudomonadota</taxon>
        <taxon>Gammaproteobacteria</taxon>
        <taxon>Enterobacterales</taxon>
        <taxon>Enterobacteriaceae</taxon>
        <taxon>Salmonella</taxon>
    </lineage>
</organism>
<name>5DNU_SALSV</name>